<organism>
    <name type="scientific">Saccharomyces cerevisiae (strain YJM789)</name>
    <name type="common">Baker's yeast</name>
    <dbReference type="NCBI Taxonomy" id="307796"/>
    <lineage>
        <taxon>Eukaryota</taxon>
        <taxon>Fungi</taxon>
        <taxon>Dikarya</taxon>
        <taxon>Ascomycota</taxon>
        <taxon>Saccharomycotina</taxon>
        <taxon>Saccharomycetes</taxon>
        <taxon>Saccharomycetales</taxon>
        <taxon>Saccharomycetaceae</taxon>
        <taxon>Saccharomyces</taxon>
    </lineage>
</organism>
<name>DMA2_YEAS7</name>
<evidence type="ECO:0000250" key="1"/>
<evidence type="ECO:0000250" key="2">
    <source>
        <dbReference type="UniProtKB" id="P53924"/>
    </source>
</evidence>
<evidence type="ECO:0000255" key="3">
    <source>
        <dbReference type="PROSITE-ProRule" id="PRU00086"/>
    </source>
</evidence>
<evidence type="ECO:0000255" key="4">
    <source>
        <dbReference type="PROSITE-ProRule" id="PRU00175"/>
    </source>
</evidence>
<evidence type="ECO:0000256" key="5">
    <source>
        <dbReference type="SAM" id="MobiDB-lite"/>
    </source>
</evidence>
<evidence type="ECO:0000305" key="6"/>
<feature type="chain" id="PRO_0000389561" description="E3 ubiquitin-protein ligase DMA2">
    <location>
        <begin position="1"/>
        <end position="522"/>
    </location>
</feature>
<feature type="domain" description="FHA" evidence="3">
    <location>
        <begin position="295"/>
        <end position="358"/>
    </location>
</feature>
<feature type="zinc finger region" description="RING-type; atypical" evidence="4">
    <location>
        <begin position="433"/>
        <end position="477"/>
    </location>
</feature>
<feature type="region of interest" description="Disordered" evidence="5">
    <location>
        <begin position="1"/>
        <end position="56"/>
    </location>
</feature>
<feature type="region of interest" description="Disordered" evidence="5">
    <location>
        <begin position="69"/>
        <end position="92"/>
    </location>
</feature>
<feature type="compositionally biased region" description="Low complexity" evidence="5">
    <location>
        <begin position="14"/>
        <end position="35"/>
    </location>
</feature>
<feature type="compositionally biased region" description="Polar residues" evidence="5">
    <location>
        <begin position="36"/>
        <end position="49"/>
    </location>
</feature>
<feature type="modified residue" description="Phosphoserine" evidence="2">
    <location>
        <position position="206"/>
    </location>
</feature>
<feature type="cross-link" description="Glycyl lysine isopeptide (Lys-Gly) (interchain with G-Cter in ubiquitin)" evidence="2">
    <location>
        <position position="211"/>
    </location>
</feature>
<feature type="cross-link" description="Glycyl lysine isopeptide (Lys-Gly) (interchain with G-Cter in ubiquitin)" evidence="2">
    <location>
        <position position="256"/>
    </location>
</feature>
<feature type="cross-link" description="Glycyl lysine isopeptide (Lys-Gly) (interchain with G-Cter in ubiquitin)" evidence="2">
    <location>
        <position position="258"/>
    </location>
</feature>
<feature type="cross-link" description="Glycyl lysine isopeptide (Lys-Gly) (interchain with G-Cter in ubiquitin)" evidence="2">
    <location>
        <position position="288"/>
    </location>
</feature>
<feature type="cross-link" description="Glycyl lysine isopeptide (Lys-Gly) (interchain with G-Cter in ubiquitin)" evidence="2">
    <location>
        <position position="310"/>
    </location>
</feature>
<feature type="cross-link" description="Glycyl lysine isopeptide (Lys-Gly) (interchain with G-Cter in ubiquitin)" evidence="2">
    <location>
        <position position="333"/>
    </location>
</feature>
<feature type="cross-link" description="Glycyl lysine isopeptide (Lys-Gly) (interchain with G-Cter in ubiquitin)" evidence="2">
    <location>
        <position position="343"/>
    </location>
</feature>
<feature type="cross-link" description="Glycyl lysine isopeptide (Lys-Gly) (interchain with G-Cter in ubiquitin)" evidence="2">
    <location>
        <position position="346"/>
    </location>
</feature>
<feature type="cross-link" description="Glycyl lysine isopeptide (Lys-Gly) (interchain with G-Cter in ubiquitin)" evidence="2">
    <location>
        <position position="366"/>
    </location>
</feature>
<feature type="cross-link" description="Glycyl lysine isopeptide (Lys-Gly) (interchain with G-Cter in ubiquitin)" evidence="2">
    <location>
        <position position="406"/>
    </location>
</feature>
<feature type="cross-link" description="Glycyl lysine isopeptide (Lys-Gly) (interchain with G-Cter in ubiquitin)" evidence="2">
    <location>
        <position position="412"/>
    </location>
</feature>
<feature type="cross-link" description="Glycyl lysine isopeptide (Lys-Gly) (interchain with G-Cter in ubiquitin)" evidence="2">
    <location>
        <position position="423"/>
    </location>
</feature>
<gene>
    <name type="primary">DMA2</name>
    <name type="synonym">CHF2</name>
    <name type="ORF">SCY_4678</name>
</gene>
<proteinExistence type="inferred from homology"/>
<dbReference type="EC" id="2.3.2.27" evidence="2"/>
<dbReference type="EMBL" id="EF125227">
    <property type="protein sequence ID" value="ABN58640.1"/>
    <property type="molecule type" value="Genomic_DNA"/>
</dbReference>
<dbReference type="EMBL" id="AAFW02000067">
    <property type="protein sequence ID" value="EDN62699.1"/>
    <property type="molecule type" value="Genomic_DNA"/>
</dbReference>
<dbReference type="SMR" id="A6ZRW7"/>
<dbReference type="HOGENOM" id="CLU_017542_2_0_1"/>
<dbReference type="Proteomes" id="UP000007060">
    <property type="component" value="Unassembled WGS sequence"/>
</dbReference>
<dbReference type="GO" id="GO:0032153">
    <property type="term" value="C:cell division site"/>
    <property type="evidence" value="ECO:0007669"/>
    <property type="project" value="TreeGrafter"/>
</dbReference>
<dbReference type="GO" id="GO:0005829">
    <property type="term" value="C:cytosol"/>
    <property type="evidence" value="ECO:0007669"/>
    <property type="project" value="TreeGrafter"/>
</dbReference>
<dbReference type="GO" id="GO:0000151">
    <property type="term" value="C:ubiquitin ligase complex"/>
    <property type="evidence" value="ECO:0007669"/>
    <property type="project" value="TreeGrafter"/>
</dbReference>
<dbReference type="GO" id="GO:0061630">
    <property type="term" value="F:ubiquitin protein ligase activity"/>
    <property type="evidence" value="ECO:0007669"/>
    <property type="project" value="TreeGrafter"/>
</dbReference>
<dbReference type="GO" id="GO:0008270">
    <property type="term" value="F:zinc ion binding"/>
    <property type="evidence" value="ECO:0007669"/>
    <property type="project" value="UniProtKB-KW"/>
</dbReference>
<dbReference type="GO" id="GO:0051301">
    <property type="term" value="P:cell division"/>
    <property type="evidence" value="ECO:0007669"/>
    <property type="project" value="UniProtKB-KW"/>
</dbReference>
<dbReference type="GO" id="GO:0016567">
    <property type="term" value="P:protein ubiquitination"/>
    <property type="evidence" value="ECO:0007669"/>
    <property type="project" value="TreeGrafter"/>
</dbReference>
<dbReference type="GO" id="GO:0006511">
    <property type="term" value="P:ubiquitin-dependent protein catabolic process"/>
    <property type="evidence" value="ECO:0007669"/>
    <property type="project" value="TreeGrafter"/>
</dbReference>
<dbReference type="CDD" id="cd22692">
    <property type="entry name" value="FHA_DMA-like"/>
    <property type="match status" value="1"/>
</dbReference>
<dbReference type="CDD" id="cd16458">
    <property type="entry name" value="RING-H2_Dmap-like"/>
    <property type="match status" value="1"/>
</dbReference>
<dbReference type="FunFam" id="3.30.40.10:FF:000426">
    <property type="entry name" value="DMA1p Ubiquitin-protein ligase (E3)"/>
    <property type="match status" value="1"/>
</dbReference>
<dbReference type="FunFam" id="2.60.200.20:FF:000030">
    <property type="entry name" value="FHA domain-containing protein"/>
    <property type="match status" value="1"/>
</dbReference>
<dbReference type="Gene3D" id="2.60.200.20">
    <property type="match status" value="1"/>
</dbReference>
<dbReference type="Gene3D" id="3.30.40.10">
    <property type="entry name" value="Zinc/RING finger domain, C3HC4 (zinc finger)"/>
    <property type="match status" value="1"/>
</dbReference>
<dbReference type="InterPro" id="IPR042823">
    <property type="entry name" value="Dma1/Dma2_RING-H2"/>
</dbReference>
<dbReference type="InterPro" id="IPR000253">
    <property type="entry name" value="FHA_dom"/>
</dbReference>
<dbReference type="InterPro" id="IPR008984">
    <property type="entry name" value="SMAD_FHA_dom_sf"/>
</dbReference>
<dbReference type="InterPro" id="IPR001841">
    <property type="entry name" value="Znf_RING"/>
</dbReference>
<dbReference type="InterPro" id="IPR013083">
    <property type="entry name" value="Znf_RING/FYVE/PHD"/>
</dbReference>
<dbReference type="PANTHER" id="PTHR15067:SF7">
    <property type="entry name" value="E3 UBIQUITIN-PROTEIN LIGASE DMA1-RELATED"/>
    <property type="match status" value="1"/>
</dbReference>
<dbReference type="PANTHER" id="PTHR15067">
    <property type="entry name" value="E3 UBIQUITIN-PROTEIN LIGASE RNF8"/>
    <property type="match status" value="1"/>
</dbReference>
<dbReference type="Pfam" id="PF00498">
    <property type="entry name" value="FHA"/>
    <property type="match status" value="1"/>
</dbReference>
<dbReference type="Pfam" id="PF17123">
    <property type="entry name" value="zf-RING_11"/>
    <property type="match status" value="1"/>
</dbReference>
<dbReference type="SMART" id="SM00240">
    <property type="entry name" value="FHA"/>
    <property type="match status" value="1"/>
</dbReference>
<dbReference type="SUPFAM" id="SSF57850">
    <property type="entry name" value="RING/U-box"/>
    <property type="match status" value="1"/>
</dbReference>
<dbReference type="SUPFAM" id="SSF49879">
    <property type="entry name" value="SMAD/FHA domain"/>
    <property type="match status" value="1"/>
</dbReference>
<dbReference type="PROSITE" id="PS50006">
    <property type="entry name" value="FHA_DOMAIN"/>
    <property type="match status" value="1"/>
</dbReference>
<dbReference type="PROSITE" id="PS50089">
    <property type="entry name" value="ZF_RING_2"/>
    <property type="match status" value="1"/>
</dbReference>
<reference key="1">
    <citation type="journal article" date="2008" name="Genetics">
        <title>Sequential elimination of major-effect contributors identifies additional quantitative trait loci conditioning high-temperature growth in yeast.</title>
        <authorList>
            <person name="Sinha H."/>
            <person name="David L."/>
            <person name="Pascon R.C."/>
            <person name="Clauder-Muenster S."/>
            <person name="Krishnakumar S."/>
            <person name="Nguyen M."/>
            <person name="Shi G."/>
            <person name="Dean J."/>
            <person name="Davis R.W."/>
            <person name="Oefner P.J."/>
            <person name="McCusker J.H."/>
            <person name="Steinmetz L.M."/>
        </authorList>
    </citation>
    <scope>NUCLEOTIDE SEQUENCE [GENOMIC DNA]</scope>
</reference>
<reference key="2">
    <citation type="journal article" date="2007" name="Proc. Natl. Acad. Sci. U.S.A.">
        <title>Genome sequencing and comparative analysis of Saccharomyces cerevisiae strain YJM789.</title>
        <authorList>
            <person name="Wei W."/>
            <person name="McCusker J.H."/>
            <person name="Hyman R.W."/>
            <person name="Jones T."/>
            <person name="Ning Y."/>
            <person name="Cao Z."/>
            <person name="Gu Z."/>
            <person name="Bruno D."/>
            <person name="Miranda M."/>
            <person name="Nguyen M."/>
            <person name="Wilhelmy J."/>
            <person name="Komp C."/>
            <person name="Tamse R."/>
            <person name="Wang X."/>
            <person name="Jia P."/>
            <person name="Luedi P."/>
            <person name="Oefner P.J."/>
            <person name="David L."/>
            <person name="Dietrich F.S."/>
            <person name="Li Y."/>
            <person name="Davis R.W."/>
            <person name="Steinmetz L.M."/>
        </authorList>
    </citation>
    <scope>NUCLEOTIDE SEQUENCE [LARGE SCALE GENOMIC DNA]</scope>
    <source>
        <strain>YJM789</strain>
    </source>
</reference>
<keyword id="KW-0131">Cell cycle</keyword>
<keyword id="KW-0132">Cell division</keyword>
<keyword id="KW-0963">Cytoplasm</keyword>
<keyword id="KW-1017">Isopeptide bond</keyword>
<keyword id="KW-0479">Metal-binding</keyword>
<keyword id="KW-0498">Mitosis</keyword>
<keyword id="KW-0597">Phosphoprotein</keyword>
<keyword id="KW-0808">Transferase</keyword>
<keyword id="KW-0832">Ubl conjugation</keyword>
<keyword id="KW-0833">Ubl conjugation pathway</keyword>
<keyword id="KW-0862">Zinc</keyword>
<keyword id="KW-0863">Zinc-finger</keyword>
<comment type="function">
    <text evidence="2">E3 ubiquitin-protein ligase which functions in cell cycle retarding in conjunction with the UBC4 and UBC13/MMS2 complex, 2 E2 ubiquitin conjugating enzymes. Involved in nutritional control of the cell cycle. Required for proper spindle positioning, likely regulating septin ring deposition at the bud neck.</text>
</comment>
<comment type="catalytic activity">
    <reaction evidence="2">
        <text>S-ubiquitinyl-[E2 ubiquitin-conjugating enzyme]-L-cysteine + [acceptor protein]-L-lysine = [E2 ubiquitin-conjugating enzyme]-L-cysteine + N(6)-ubiquitinyl-[acceptor protein]-L-lysine.</text>
        <dbReference type="EC" id="2.3.2.27"/>
    </reaction>
</comment>
<comment type="subcellular location">
    <subcellularLocation>
        <location evidence="1">Cytoplasm</location>
    </subcellularLocation>
</comment>
<comment type="PTM">
    <text evidence="1">UBC4-dependent autoubiquitination occurs at Lys-211, Lys-258, Lys-288, Lys-310, Lys-333, Lys-343, Lys-346, Lys-366, Lys-406, Lys-412 and Lys-423. UBC13/MMS2-dependent autoubiquitination occurs at Lys-258, Lys-310, Lys-346 and Lys-366. Lys-211, Lys-256, Lys-288, Lys-310, Lys-343, Lys-258, Lys-366 and Lys-412 are also ubiquitinated in trans by DMA1 E3 ligase in association with UBC4.</text>
</comment>
<comment type="similarity">
    <text evidence="6">Belongs to the DMA1 family.</text>
</comment>
<accession>A6ZRW7</accession>
<accession>B0KZW4</accession>
<sequence length="522" mass="57570">MYTPIPANTPAPTAPTSSMTSNSSSASNANTTSSSGINPRNRASGTPSNERARPASGISSFLNTFGIRQNSQTASSSAAPDQRLFGTTPSNSHMSVAMESIDTAPQQQEPRLHHPIQMPLSAQFHVHRNYQLPISISLTAPTTTDHQQSSAHNFEGNNVGNVQESLNQRQPNGTNNTTTSIISMAPAATTRNIVGGADGSTIVNNSQEMYKNLRHLIYAANQPNGTEILHLDLPATSAEESNNMFNVDEVTLKQRKDKHGLFSIRLTPFIDSSSTTNQGLFFEPIIRKAGPGSQLVIGRYTERVRDAISKIPEQYHPVVFKSKVVSRTHGCFKVDSQGNWYIKDVKSSSGTFLNHQRLSPASSLSKDTPLRDGDILQLGMDFRGGTEEIYRCVRMRIELNRSWKLKANSFNKEALQRLQNLQKLTTGVEEEDCSICLCKIKPCQAIFISPCAHSWHFRCVRRLVMLSYPQFVCPNCRSSCDLEASFESSDEEDESDVESEGDQLVDQLSVLMETSKDVDSHP</sequence>
<protein>
    <recommendedName>
        <fullName>E3 ubiquitin-protein ligase DMA2</fullName>
        <ecNumber evidence="2">2.3.2.27</ecNumber>
    </recommendedName>
    <alternativeName>
        <fullName>Checkpoint forkhead associated with RING domains-containing protein 1</fullName>
    </alternativeName>
    <alternativeName>
        <fullName>Defective in mitotic arrest protein 2</fullName>
    </alternativeName>
    <alternativeName>
        <fullName evidence="6">RING-type E3 ubiquitin transferase DMA2</fullName>
    </alternativeName>
</protein>